<evidence type="ECO:0000255" key="1">
    <source>
        <dbReference type="HAMAP-Rule" id="MF_00182"/>
    </source>
</evidence>
<evidence type="ECO:0000256" key="2">
    <source>
        <dbReference type="SAM" id="MobiDB-lite"/>
    </source>
</evidence>
<reference key="1">
    <citation type="submission" date="2007-04" db="EMBL/GenBank/DDBJ databases">
        <title>Complete sequence of chromosome of Mycobacterium gilvum PYR-GCK.</title>
        <authorList>
            <consortium name="US DOE Joint Genome Institute"/>
            <person name="Copeland A."/>
            <person name="Lucas S."/>
            <person name="Lapidus A."/>
            <person name="Barry K."/>
            <person name="Detter J.C."/>
            <person name="Glavina del Rio T."/>
            <person name="Hammon N."/>
            <person name="Israni S."/>
            <person name="Dalin E."/>
            <person name="Tice H."/>
            <person name="Pitluck S."/>
            <person name="Chain P."/>
            <person name="Malfatti S."/>
            <person name="Shin M."/>
            <person name="Vergez L."/>
            <person name="Schmutz J."/>
            <person name="Larimer F."/>
            <person name="Land M."/>
            <person name="Hauser L."/>
            <person name="Kyrpides N."/>
            <person name="Mikhailova N."/>
            <person name="Miller C."/>
            <person name="Richardson P."/>
        </authorList>
    </citation>
    <scope>NUCLEOTIDE SEQUENCE [LARGE SCALE GENOMIC DNA]</scope>
    <source>
        <strain>PYR-GCK</strain>
    </source>
</reference>
<feature type="chain" id="PRO_1000077307" description="Methionyl-tRNA formyltransferase">
    <location>
        <begin position="1"/>
        <end position="310"/>
    </location>
</feature>
<feature type="region of interest" description="Disordered" evidence="2">
    <location>
        <begin position="283"/>
        <end position="310"/>
    </location>
</feature>
<feature type="compositionally biased region" description="Basic and acidic residues" evidence="2">
    <location>
        <begin position="299"/>
        <end position="310"/>
    </location>
</feature>
<feature type="binding site" evidence="1">
    <location>
        <begin position="110"/>
        <end position="113"/>
    </location>
    <ligand>
        <name>(6S)-5,6,7,8-tetrahydrofolate</name>
        <dbReference type="ChEBI" id="CHEBI:57453"/>
    </ligand>
</feature>
<keyword id="KW-0648">Protein biosynthesis</keyword>
<keyword id="KW-0808">Transferase</keyword>
<name>FMT_MYCGI</name>
<comment type="function">
    <text evidence="1">Attaches a formyl group to the free amino group of methionyl-tRNA(fMet). The formyl group appears to play a dual role in the initiator identity of N-formylmethionyl-tRNA by promoting its recognition by IF2 and preventing the misappropriation of this tRNA by the elongation apparatus.</text>
</comment>
<comment type="catalytic activity">
    <reaction evidence="1">
        <text>L-methionyl-tRNA(fMet) + (6R)-10-formyltetrahydrofolate = N-formyl-L-methionyl-tRNA(fMet) + (6S)-5,6,7,8-tetrahydrofolate + H(+)</text>
        <dbReference type="Rhea" id="RHEA:24380"/>
        <dbReference type="Rhea" id="RHEA-COMP:9952"/>
        <dbReference type="Rhea" id="RHEA-COMP:9953"/>
        <dbReference type="ChEBI" id="CHEBI:15378"/>
        <dbReference type="ChEBI" id="CHEBI:57453"/>
        <dbReference type="ChEBI" id="CHEBI:78530"/>
        <dbReference type="ChEBI" id="CHEBI:78844"/>
        <dbReference type="ChEBI" id="CHEBI:195366"/>
        <dbReference type="EC" id="2.1.2.9"/>
    </reaction>
</comment>
<comment type="similarity">
    <text evidence="1">Belongs to the Fmt family.</text>
</comment>
<organism>
    <name type="scientific">Mycolicibacterium gilvum (strain PYR-GCK)</name>
    <name type="common">Mycobacterium gilvum (strain PYR-GCK)</name>
    <dbReference type="NCBI Taxonomy" id="350054"/>
    <lineage>
        <taxon>Bacteria</taxon>
        <taxon>Bacillati</taxon>
        <taxon>Actinomycetota</taxon>
        <taxon>Actinomycetes</taxon>
        <taxon>Mycobacteriales</taxon>
        <taxon>Mycobacteriaceae</taxon>
        <taxon>Mycolicibacterium</taxon>
    </lineage>
</organism>
<proteinExistence type="inferred from homology"/>
<sequence>MRLVFAGTPEPALPSLQRLIDSARHDVIAVLTRPDAAAGRRGRPSPSPVAELAAAHGIPVLKPPRPNSEEFVAELAALAPDCCAVVAYGALLREELLAVPALGWVNLHFSVLPAWRGAAPVQAALAAGDEVTGATTFQIELSLDSGPVYGVVTETIRPTDTAGDLLGRLAESGAGLLEATMDGIEDGTLTAVPQPAEGVSIAPKVSVDDARIRWELPAHVVDRRIRSVTPNPGAWTMAGELRIKVGPVTVPDDGPKDLEPGEIRVGKKHVHVGTATDAVLLGTVQPPGKKSMNAADWARGARAEDIRRAR</sequence>
<accession>A4TC02</accession>
<protein>
    <recommendedName>
        <fullName evidence="1">Methionyl-tRNA formyltransferase</fullName>
        <ecNumber evidence="1">2.1.2.9</ecNumber>
    </recommendedName>
</protein>
<dbReference type="EC" id="2.1.2.9" evidence="1"/>
<dbReference type="EMBL" id="CP000656">
    <property type="protein sequence ID" value="ABP46202.1"/>
    <property type="molecule type" value="Genomic_DNA"/>
</dbReference>
<dbReference type="SMR" id="A4TC02"/>
<dbReference type="STRING" id="350054.Mflv_3730"/>
<dbReference type="KEGG" id="mgi:Mflv_3730"/>
<dbReference type="eggNOG" id="COG0223">
    <property type="taxonomic scope" value="Bacteria"/>
</dbReference>
<dbReference type="HOGENOM" id="CLU_033347_1_0_11"/>
<dbReference type="OrthoDB" id="9802815at2"/>
<dbReference type="GO" id="GO:0005829">
    <property type="term" value="C:cytosol"/>
    <property type="evidence" value="ECO:0007669"/>
    <property type="project" value="TreeGrafter"/>
</dbReference>
<dbReference type="GO" id="GO:0004479">
    <property type="term" value="F:methionyl-tRNA formyltransferase activity"/>
    <property type="evidence" value="ECO:0007669"/>
    <property type="project" value="UniProtKB-UniRule"/>
</dbReference>
<dbReference type="CDD" id="cd08646">
    <property type="entry name" value="FMT_core_Met-tRNA-FMT_N"/>
    <property type="match status" value="1"/>
</dbReference>
<dbReference type="CDD" id="cd08704">
    <property type="entry name" value="Met_tRNA_FMT_C"/>
    <property type="match status" value="1"/>
</dbReference>
<dbReference type="FunFam" id="3.40.50.12230:FF:000001">
    <property type="entry name" value="Methionyl-tRNA formyltransferase"/>
    <property type="match status" value="1"/>
</dbReference>
<dbReference type="Gene3D" id="3.40.50.12230">
    <property type="match status" value="1"/>
</dbReference>
<dbReference type="HAMAP" id="MF_00182">
    <property type="entry name" value="Formyl_trans"/>
    <property type="match status" value="1"/>
</dbReference>
<dbReference type="InterPro" id="IPR005794">
    <property type="entry name" value="Fmt"/>
</dbReference>
<dbReference type="InterPro" id="IPR005793">
    <property type="entry name" value="Formyl_trans_C"/>
</dbReference>
<dbReference type="InterPro" id="IPR002376">
    <property type="entry name" value="Formyl_transf_N"/>
</dbReference>
<dbReference type="InterPro" id="IPR036477">
    <property type="entry name" value="Formyl_transf_N_sf"/>
</dbReference>
<dbReference type="InterPro" id="IPR011034">
    <property type="entry name" value="Formyl_transferase-like_C_sf"/>
</dbReference>
<dbReference type="InterPro" id="IPR044135">
    <property type="entry name" value="Met-tRNA-FMT_C"/>
</dbReference>
<dbReference type="InterPro" id="IPR041711">
    <property type="entry name" value="Met-tRNA-FMT_N"/>
</dbReference>
<dbReference type="NCBIfam" id="TIGR00460">
    <property type="entry name" value="fmt"/>
    <property type="match status" value="1"/>
</dbReference>
<dbReference type="PANTHER" id="PTHR11138">
    <property type="entry name" value="METHIONYL-TRNA FORMYLTRANSFERASE"/>
    <property type="match status" value="1"/>
</dbReference>
<dbReference type="PANTHER" id="PTHR11138:SF5">
    <property type="entry name" value="METHIONYL-TRNA FORMYLTRANSFERASE, MITOCHONDRIAL"/>
    <property type="match status" value="1"/>
</dbReference>
<dbReference type="Pfam" id="PF02911">
    <property type="entry name" value="Formyl_trans_C"/>
    <property type="match status" value="1"/>
</dbReference>
<dbReference type="Pfam" id="PF00551">
    <property type="entry name" value="Formyl_trans_N"/>
    <property type="match status" value="1"/>
</dbReference>
<dbReference type="SUPFAM" id="SSF50486">
    <property type="entry name" value="FMT C-terminal domain-like"/>
    <property type="match status" value="1"/>
</dbReference>
<dbReference type="SUPFAM" id="SSF53328">
    <property type="entry name" value="Formyltransferase"/>
    <property type="match status" value="1"/>
</dbReference>
<gene>
    <name evidence="1" type="primary">fmt</name>
    <name type="ordered locus">Mflv_3730</name>
</gene>